<comment type="function">
    <text evidence="1">Catalyzes the transfer of an acyl group from acyl-phosphate (acyl-PO(4)) to glycerol-3-phosphate (G3P) to form lysophosphatidic acid (LPA). This enzyme utilizes acyl-phosphate as fatty acyl donor, but not acyl-CoA or acyl-ACP.</text>
</comment>
<comment type="catalytic activity">
    <reaction evidence="1">
        <text>an acyl phosphate + sn-glycerol 3-phosphate = a 1-acyl-sn-glycero-3-phosphate + phosphate</text>
        <dbReference type="Rhea" id="RHEA:34075"/>
        <dbReference type="ChEBI" id="CHEBI:43474"/>
        <dbReference type="ChEBI" id="CHEBI:57597"/>
        <dbReference type="ChEBI" id="CHEBI:57970"/>
        <dbReference type="ChEBI" id="CHEBI:59918"/>
        <dbReference type="EC" id="2.3.1.275"/>
    </reaction>
</comment>
<comment type="pathway">
    <text evidence="1">Lipid metabolism; phospholipid metabolism.</text>
</comment>
<comment type="subunit">
    <text evidence="1">Probably interacts with PlsX.</text>
</comment>
<comment type="subcellular location">
    <subcellularLocation>
        <location evidence="1">Cell inner membrane</location>
        <topology evidence="1">Multi-pass membrane protein</topology>
    </subcellularLocation>
</comment>
<comment type="similarity">
    <text evidence="1">Belongs to the PlsY family.</text>
</comment>
<feature type="chain" id="PRO_1000149564" description="Glycerol-3-phosphate acyltransferase">
    <location>
        <begin position="1"/>
        <end position="203"/>
    </location>
</feature>
<feature type="transmembrane region" description="Helical" evidence="1">
    <location>
        <begin position="5"/>
        <end position="25"/>
    </location>
</feature>
<feature type="transmembrane region" description="Helical" evidence="1">
    <location>
        <begin position="58"/>
        <end position="78"/>
    </location>
</feature>
<feature type="transmembrane region" description="Helical" evidence="1">
    <location>
        <begin position="87"/>
        <end position="107"/>
    </location>
</feature>
<feature type="transmembrane region" description="Helical" evidence="1">
    <location>
        <begin position="118"/>
        <end position="138"/>
    </location>
</feature>
<feature type="transmembrane region" description="Helical" evidence="1">
    <location>
        <begin position="150"/>
        <end position="170"/>
    </location>
</feature>
<feature type="transmembrane region" description="Helical" evidence="1">
    <location>
        <begin position="176"/>
        <end position="196"/>
    </location>
</feature>
<protein>
    <recommendedName>
        <fullName evidence="1">Glycerol-3-phosphate acyltransferase</fullName>
    </recommendedName>
    <alternativeName>
        <fullName evidence="1">Acyl-PO4 G3P acyltransferase</fullName>
    </alternativeName>
    <alternativeName>
        <fullName evidence="1">Acyl-phosphate--glycerol-3-phosphate acyltransferase</fullName>
    </alternativeName>
    <alternativeName>
        <fullName evidence="1">G3P acyltransferase</fullName>
        <shortName evidence="1">GPAT</shortName>
        <ecNumber evidence="1">2.3.1.275</ecNumber>
    </alternativeName>
    <alternativeName>
        <fullName evidence="1">Lysophosphatidic acid synthase</fullName>
        <shortName evidence="1">LPA synthase</shortName>
    </alternativeName>
</protein>
<organism>
    <name type="scientific">Campylobacter lari (strain RM2100 / D67 / ATCC BAA-1060)</name>
    <dbReference type="NCBI Taxonomy" id="306263"/>
    <lineage>
        <taxon>Bacteria</taxon>
        <taxon>Pseudomonadati</taxon>
        <taxon>Campylobacterota</taxon>
        <taxon>Epsilonproteobacteria</taxon>
        <taxon>Campylobacterales</taxon>
        <taxon>Campylobacteraceae</taxon>
        <taxon>Campylobacter</taxon>
    </lineage>
</organism>
<proteinExistence type="inferred from homology"/>
<sequence length="203" mass="22039">MENLIIYLLAYLIGAIPFGLLLAQIFAKTNIKNAGSKSIGATNVLRVVKESNPKLAKTLAVATVILDALKGVLPILMAKFYGFDDNILWTMAVLAVFGHCFSPYLKFEGGKGVATGAGVLAVFLPFEIICALLAWFIIGKVFKISSLASLGAMIVLIATSFIFHYDIPVINTHAPIFIIAFIVVYKHIPNILRLIGKQECKVI</sequence>
<reference key="1">
    <citation type="journal article" date="2008" name="Foodborne Pathog. Dis.">
        <title>The complete genome sequence and analysis of the human pathogen Campylobacter lari.</title>
        <authorList>
            <person name="Miller W.G."/>
            <person name="Wang G."/>
            <person name="Binnewies T.T."/>
            <person name="Parker C.T."/>
        </authorList>
    </citation>
    <scope>NUCLEOTIDE SEQUENCE [LARGE SCALE GENOMIC DNA]</scope>
    <source>
        <strain>RM2100 / D67 / ATCC BAA-1060</strain>
    </source>
</reference>
<evidence type="ECO:0000255" key="1">
    <source>
        <dbReference type="HAMAP-Rule" id="MF_01043"/>
    </source>
</evidence>
<name>PLSY_CAMLR</name>
<gene>
    <name evidence="1" type="primary">plsY</name>
    <name type="ordered locus">Cla_0177</name>
</gene>
<accession>B9KEQ5</accession>
<dbReference type="EC" id="2.3.1.275" evidence="1"/>
<dbReference type="EMBL" id="CP000932">
    <property type="protein sequence ID" value="ACM63540.1"/>
    <property type="molecule type" value="Genomic_DNA"/>
</dbReference>
<dbReference type="RefSeq" id="WP_012660925.1">
    <property type="nucleotide sequence ID" value="NC_012039.1"/>
</dbReference>
<dbReference type="SMR" id="B9KEQ5"/>
<dbReference type="STRING" id="306263.Cla_0177"/>
<dbReference type="KEGG" id="cla:CLA_0177"/>
<dbReference type="PATRIC" id="fig|306263.5.peg.176"/>
<dbReference type="eggNOG" id="COG0344">
    <property type="taxonomic scope" value="Bacteria"/>
</dbReference>
<dbReference type="HOGENOM" id="CLU_081254_2_0_7"/>
<dbReference type="UniPathway" id="UPA00085"/>
<dbReference type="Proteomes" id="UP000007727">
    <property type="component" value="Chromosome"/>
</dbReference>
<dbReference type="GO" id="GO:0005886">
    <property type="term" value="C:plasma membrane"/>
    <property type="evidence" value="ECO:0007669"/>
    <property type="project" value="UniProtKB-SubCell"/>
</dbReference>
<dbReference type="GO" id="GO:0043772">
    <property type="term" value="F:acyl-phosphate glycerol-3-phosphate acyltransferase activity"/>
    <property type="evidence" value="ECO:0007669"/>
    <property type="project" value="UniProtKB-UniRule"/>
</dbReference>
<dbReference type="GO" id="GO:0008654">
    <property type="term" value="P:phospholipid biosynthetic process"/>
    <property type="evidence" value="ECO:0007669"/>
    <property type="project" value="UniProtKB-UniRule"/>
</dbReference>
<dbReference type="HAMAP" id="MF_01043">
    <property type="entry name" value="PlsY"/>
    <property type="match status" value="1"/>
</dbReference>
<dbReference type="InterPro" id="IPR003811">
    <property type="entry name" value="G3P_acylTferase_PlsY"/>
</dbReference>
<dbReference type="NCBIfam" id="TIGR00023">
    <property type="entry name" value="glycerol-3-phosphate 1-O-acyltransferase PlsY"/>
    <property type="match status" value="1"/>
</dbReference>
<dbReference type="PANTHER" id="PTHR30309:SF0">
    <property type="entry name" value="GLYCEROL-3-PHOSPHATE ACYLTRANSFERASE-RELATED"/>
    <property type="match status" value="1"/>
</dbReference>
<dbReference type="PANTHER" id="PTHR30309">
    <property type="entry name" value="INNER MEMBRANE PROTEIN YGIH"/>
    <property type="match status" value="1"/>
</dbReference>
<dbReference type="Pfam" id="PF02660">
    <property type="entry name" value="G3P_acyltransf"/>
    <property type="match status" value="1"/>
</dbReference>
<dbReference type="SMART" id="SM01207">
    <property type="entry name" value="G3P_acyltransf"/>
    <property type="match status" value="1"/>
</dbReference>
<keyword id="KW-0997">Cell inner membrane</keyword>
<keyword id="KW-1003">Cell membrane</keyword>
<keyword id="KW-0444">Lipid biosynthesis</keyword>
<keyword id="KW-0443">Lipid metabolism</keyword>
<keyword id="KW-0472">Membrane</keyword>
<keyword id="KW-0594">Phospholipid biosynthesis</keyword>
<keyword id="KW-1208">Phospholipid metabolism</keyword>
<keyword id="KW-1185">Reference proteome</keyword>
<keyword id="KW-0808">Transferase</keyword>
<keyword id="KW-0812">Transmembrane</keyword>
<keyword id="KW-1133">Transmembrane helix</keyword>